<reference key="1">
    <citation type="submission" date="2007-12" db="EMBL/GenBank/DDBJ databases">
        <title>Brucella suis ATCC 23445 whole genome shotgun sequencing project.</title>
        <authorList>
            <person name="Setubal J.C."/>
            <person name="Bowns C."/>
            <person name="Boyle S."/>
            <person name="Crasta O.R."/>
            <person name="Czar M.J."/>
            <person name="Dharmanolla C."/>
            <person name="Gillespie J.J."/>
            <person name="Kenyon R.W."/>
            <person name="Lu J."/>
            <person name="Mane S."/>
            <person name="Mohapatra S."/>
            <person name="Nagrani S."/>
            <person name="Purkayastha A."/>
            <person name="Rajasimha H.K."/>
            <person name="Shallom J.M."/>
            <person name="Shallom S."/>
            <person name="Shukla M."/>
            <person name="Snyder E.E."/>
            <person name="Sobral B.W."/>
            <person name="Wattam A.R."/>
            <person name="Will R."/>
            <person name="Williams K."/>
            <person name="Yoo H."/>
            <person name="Bruce D."/>
            <person name="Detter C."/>
            <person name="Munk C."/>
            <person name="Brettin T.S."/>
        </authorList>
    </citation>
    <scope>NUCLEOTIDE SEQUENCE [LARGE SCALE GENOMIC DNA]</scope>
    <source>
        <strain>ATCC 23445 / NCTC 10510</strain>
    </source>
</reference>
<evidence type="ECO:0000255" key="1">
    <source>
        <dbReference type="HAMAP-Rule" id="MF_01218"/>
    </source>
</evidence>
<protein>
    <recommendedName>
        <fullName evidence="1">Uracil phosphoribosyltransferase</fullName>
        <ecNumber evidence="1">2.4.2.9</ecNumber>
    </recommendedName>
    <alternativeName>
        <fullName evidence="1">UMP pyrophosphorylase</fullName>
    </alternativeName>
    <alternativeName>
        <fullName evidence="1">UPRTase</fullName>
    </alternativeName>
</protein>
<keyword id="KW-0021">Allosteric enzyme</keyword>
<keyword id="KW-0328">Glycosyltransferase</keyword>
<keyword id="KW-0342">GTP-binding</keyword>
<keyword id="KW-0460">Magnesium</keyword>
<keyword id="KW-0547">Nucleotide-binding</keyword>
<keyword id="KW-0808">Transferase</keyword>
<proteinExistence type="inferred from homology"/>
<gene>
    <name evidence="1" type="primary">upp</name>
    <name type="ordered locus">BSUIS_B1062</name>
</gene>
<name>UPP_BRUSI</name>
<comment type="function">
    <text evidence="1">Catalyzes the conversion of uracil and 5-phospho-alpha-D-ribose 1-diphosphate (PRPP) to UMP and diphosphate.</text>
</comment>
<comment type="catalytic activity">
    <reaction evidence="1">
        <text>UMP + diphosphate = 5-phospho-alpha-D-ribose 1-diphosphate + uracil</text>
        <dbReference type="Rhea" id="RHEA:13017"/>
        <dbReference type="ChEBI" id="CHEBI:17568"/>
        <dbReference type="ChEBI" id="CHEBI:33019"/>
        <dbReference type="ChEBI" id="CHEBI:57865"/>
        <dbReference type="ChEBI" id="CHEBI:58017"/>
        <dbReference type="EC" id="2.4.2.9"/>
    </reaction>
</comment>
<comment type="cofactor">
    <cofactor evidence="1">
        <name>Mg(2+)</name>
        <dbReference type="ChEBI" id="CHEBI:18420"/>
    </cofactor>
    <text evidence="1">Binds 1 Mg(2+) ion per subunit. The magnesium is bound as Mg-PRPP.</text>
</comment>
<comment type="activity regulation">
    <text evidence="1">Allosterically activated by GTP.</text>
</comment>
<comment type="pathway">
    <text evidence="1">Pyrimidine metabolism; UMP biosynthesis via salvage pathway; UMP from uracil: step 1/1.</text>
</comment>
<comment type="similarity">
    <text evidence="1">Belongs to the UPRTase family.</text>
</comment>
<accession>A9WW75</accession>
<organism>
    <name type="scientific">Brucella suis (strain ATCC 23445 / NCTC 10510)</name>
    <dbReference type="NCBI Taxonomy" id="470137"/>
    <lineage>
        <taxon>Bacteria</taxon>
        <taxon>Pseudomonadati</taxon>
        <taxon>Pseudomonadota</taxon>
        <taxon>Alphaproteobacteria</taxon>
        <taxon>Hyphomicrobiales</taxon>
        <taxon>Brucellaceae</taxon>
        <taxon>Brucella/Ochrobactrum group</taxon>
        <taxon>Brucella</taxon>
    </lineage>
</organism>
<dbReference type="EC" id="2.4.2.9" evidence="1"/>
<dbReference type="EMBL" id="CP000912">
    <property type="protein sequence ID" value="ABY40011.1"/>
    <property type="molecule type" value="Genomic_DNA"/>
</dbReference>
<dbReference type="RefSeq" id="WP_004690415.1">
    <property type="nucleotide sequence ID" value="NC_010167.1"/>
</dbReference>
<dbReference type="SMR" id="A9WW75"/>
<dbReference type="GeneID" id="55592687"/>
<dbReference type="KEGG" id="bmt:BSUIS_B1062"/>
<dbReference type="HOGENOM" id="CLU_067096_2_2_5"/>
<dbReference type="UniPathway" id="UPA00574">
    <property type="reaction ID" value="UER00636"/>
</dbReference>
<dbReference type="Proteomes" id="UP000008545">
    <property type="component" value="Chromosome II"/>
</dbReference>
<dbReference type="GO" id="GO:0005525">
    <property type="term" value="F:GTP binding"/>
    <property type="evidence" value="ECO:0007669"/>
    <property type="project" value="UniProtKB-KW"/>
</dbReference>
<dbReference type="GO" id="GO:0000287">
    <property type="term" value="F:magnesium ion binding"/>
    <property type="evidence" value="ECO:0007669"/>
    <property type="project" value="UniProtKB-UniRule"/>
</dbReference>
<dbReference type="GO" id="GO:0004845">
    <property type="term" value="F:uracil phosphoribosyltransferase activity"/>
    <property type="evidence" value="ECO:0007669"/>
    <property type="project" value="UniProtKB-UniRule"/>
</dbReference>
<dbReference type="GO" id="GO:0044206">
    <property type="term" value="P:UMP salvage"/>
    <property type="evidence" value="ECO:0007669"/>
    <property type="project" value="UniProtKB-UniRule"/>
</dbReference>
<dbReference type="GO" id="GO:0006223">
    <property type="term" value="P:uracil salvage"/>
    <property type="evidence" value="ECO:0007669"/>
    <property type="project" value="InterPro"/>
</dbReference>
<dbReference type="CDD" id="cd06223">
    <property type="entry name" value="PRTases_typeI"/>
    <property type="match status" value="1"/>
</dbReference>
<dbReference type="FunFam" id="3.40.50.2020:FF:000003">
    <property type="entry name" value="Uracil phosphoribosyltransferase"/>
    <property type="match status" value="1"/>
</dbReference>
<dbReference type="Gene3D" id="3.40.50.2020">
    <property type="match status" value="1"/>
</dbReference>
<dbReference type="HAMAP" id="MF_01218_B">
    <property type="entry name" value="Upp_B"/>
    <property type="match status" value="1"/>
</dbReference>
<dbReference type="InterPro" id="IPR000836">
    <property type="entry name" value="PRibTrfase_dom"/>
</dbReference>
<dbReference type="InterPro" id="IPR029057">
    <property type="entry name" value="PRTase-like"/>
</dbReference>
<dbReference type="InterPro" id="IPR034332">
    <property type="entry name" value="Upp_B"/>
</dbReference>
<dbReference type="InterPro" id="IPR050054">
    <property type="entry name" value="UPRTase/APRTase"/>
</dbReference>
<dbReference type="InterPro" id="IPR005765">
    <property type="entry name" value="Ura_phspho_trans"/>
</dbReference>
<dbReference type="NCBIfam" id="NF001097">
    <property type="entry name" value="PRK00129.1"/>
    <property type="match status" value="1"/>
</dbReference>
<dbReference type="NCBIfam" id="TIGR01091">
    <property type="entry name" value="upp"/>
    <property type="match status" value="1"/>
</dbReference>
<dbReference type="PANTHER" id="PTHR32315">
    <property type="entry name" value="ADENINE PHOSPHORIBOSYLTRANSFERASE"/>
    <property type="match status" value="1"/>
</dbReference>
<dbReference type="PANTHER" id="PTHR32315:SF4">
    <property type="entry name" value="URACIL PHOSPHORIBOSYLTRANSFERASE, CHLOROPLASTIC"/>
    <property type="match status" value="1"/>
</dbReference>
<dbReference type="Pfam" id="PF14681">
    <property type="entry name" value="UPRTase"/>
    <property type="match status" value="1"/>
</dbReference>
<dbReference type="SUPFAM" id="SSF53271">
    <property type="entry name" value="PRTase-like"/>
    <property type="match status" value="1"/>
</dbReference>
<sequence length="208" mass="23019">MGVTVVSHPLVQHKLTIMRKKETSTASFQRLLKEISLLLCYEVTRNLELTTMSIETPLMPMEAPVLEGKKLVFASILRAGNGLLEGMLDLVPAARVAHIGLYRDHDTLQPIEYYFKAPEDIVNRLVIVVDPMLATANSAIAAIDKLKERGATNIRFLCLLAAPEGIERFTKAHPDVEVFTASIDERLDEKGYIVPGLGDAGDRMYGTK</sequence>
<feature type="chain" id="PRO_1000085622" description="Uracil phosphoribosyltransferase">
    <location>
        <begin position="1"/>
        <end position="208"/>
    </location>
</feature>
<feature type="binding site" evidence="1">
    <location>
        <position position="78"/>
    </location>
    <ligand>
        <name>5-phospho-alpha-D-ribose 1-diphosphate</name>
        <dbReference type="ChEBI" id="CHEBI:58017"/>
    </ligand>
</feature>
<feature type="binding site" evidence="1">
    <location>
        <position position="103"/>
    </location>
    <ligand>
        <name>5-phospho-alpha-D-ribose 1-diphosphate</name>
        <dbReference type="ChEBI" id="CHEBI:58017"/>
    </ligand>
</feature>
<feature type="binding site" evidence="1">
    <location>
        <begin position="130"/>
        <end position="138"/>
    </location>
    <ligand>
        <name>5-phospho-alpha-D-ribose 1-diphosphate</name>
        <dbReference type="ChEBI" id="CHEBI:58017"/>
    </ligand>
</feature>
<feature type="binding site" evidence="1">
    <location>
        <position position="193"/>
    </location>
    <ligand>
        <name>uracil</name>
        <dbReference type="ChEBI" id="CHEBI:17568"/>
    </ligand>
</feature>
<feature type="binding site" evidence="1">
    <location>
        <begin position="198"/>
        <end position="200"/>
    </location>
    <ligand>
        <name>uracil</name>
        <dbReference type="ChEBI" id="CHEBI:17568"/>
    </ligand>
</feature>
<feature type="binding site" evidence="1">
    <location>
        <position position="199"/>
    </location>
    <ligand>
        <name>5-phospho-alpha-D-ribose 1-diphosphate</name>
        <dbReference type="ChEBI" id="CHEBI:58017"/>
    </ligand>
</feature>